<proteinExistence type="inferred from homology"/>
<keyword id="KW-0028">Amino-acid biosynthesis</keyword>
<keyword id="KW-0055">Arginine biosynthesis</keyword>
<keyword id="KW-0963">Cytoplasm</keyword>
<keyword id="KW-0238">DNA-binding</keyword>
<keyword id="KW-0678">Repressor</keyword>
<keyword id="KW-0804">Transcription</keyword>
<keyword id="KW-0805">Transcription regulation</keyword>
<organism>
    <name type="scientific">Streptococcus pyogenes serotype M3 (strain SSI-1)</name>
    <dbReference type="NCBI Taxonomy" id="193567"/>
    <lineage>
        <taxon>Bacteria</taxon>
        <taxon>Bacillati</taxon>
        <taxon>Bacillota</taxon>
        <taxon>Bacilli</taxon>
        <taxon>Lactobacillales</taxon>
        <taxon>Streptococcaceae</taxon>
        <taxon>Streptococcus</taxon>
    </lineage>
</organism>
<dbReference type="EMBL" id="BA000034">
    <property type="protein sequence ID" value="BAC64901.1"/>
    <property type="molecule type" value="Genomic_DNA"/>
</dbReference>
<dbReference type="SMR" id="P0CZ71"/>
<dbReference type="KEGG" id="sps:SPs1806"/>
<dbReference type="HOGENOM" id="CLU_097103_3_0_9"/>
<dbReference type="UniPathway" id="UPA00068"/>
<dbReference type="GO" id="GO:0005737">
    <property type="term" value="C:cytoplasm"/>
    <property type="evidence" value="ECO:0007669"/>
    <property type="project" value="UniProtKB-SubCell"/>
</dbReference>
<dbReference type="GO" id="GO:0034618">
    <property type="term" value="F:arginine binding"/>
    <property type="evidence" value="ECO:0007669"/>
    <property type="project" value="InterPro"/>
</dbReference>
<dbReference type="GO" id="GO:0003677">
    <property type="term" value="F:DNA binding"/>
    <property type="evidence" value="ECO:0007669"/>
    <property type="project" value="UniProtKB-KW"/>
</dbReference>
<dbReference type="GO" id="GO:0003700">
    <property type="term" value="F:DNA-binding transcription factor activity"/>
    <property type="evidence" value="ECO:0007669"/>
    <property type="project" value="UniProtKB-UniRule"/>
</dbReference>
<dbReference type="GO" id="GO:0006526">
    <property type="term" value="P:L-arginine biosynthetic process"/>
    <property type="evidence" value="ECO:0007669"/>
    <property type="project" value="UniProtKB-UniPathway"/>
</dbReference>
<dbReference type="GO" id="GO:0051259">
    <property type="term" value="P:protein complex oligomerization"/>
    <property type="evidence" value="ECO:0007669"/>
    <property type="project" value="InterPro"/>
</dbReference>
<dbReference type="GO" id="GO:1900079">
    <property type="term" value="P:regulation of arginine biosynthetic process"/>
    <property type="evidence" value="ECO:0007669"/>
    <property type="project" value="UniProtKB-UniRule"/>
</dbReference>
<dbReference type="Gene3D" id="3.30.1360.40">
    <property type="match status" value="1"/>
</dbReference>
<dbReference type="Gene3D" id="1.10.10.10">
    <property type="entry name" value="Winged helix-like DNA-binding domain superfamily/Winged helix DNA-binding domain"/>
    <property type="match status" value="1"/>
</dbReference>
<dbReference type="HAMAP" id="MF_00173">
    <property type="entry name" value="Arg_repressor"/>
    <property type="match status" value="1"/>
</dbReference>
<dbReference type="InterPro" id="IPR001669">
    <property type="entry name" value="Arg_repress"/>
</dbReference>
<dbReference type="InterPro" id="IPR020899">
    <property type="entry name" value="Arg_repress_C"/>
</dbReference>
<dbReference type="InterPro" id="IPR036251">
    <property type="entry name" value="Arg_repress_C_sf"/>
</dbReference>
<dbReference type="InterPro" id="IPR020900">
    <property type="entry name" value="Arg_repress_DNA-bd"/>
</dbReference>
<dbReference type="InterPro" id="IPR036388">
    <property type="entry name" value="WH-like_DNA-bd_sf"/>
</dbReference>
<dbReference type="InterPro" id="IPR036390">
    <property type="entry name" value="WH_DNA-bd_sf"/>
</dbReference>
<dbReference type="NCBIfam" id="TIGR01529">
    <property type="entry name" value="argR_whole"/>
    <property type="match status" value="1"/>
</dbReference>
<dbReference type="PANTHER" id="PTHR34471">
    <property type="entry name" value="ARGININE REPRESSOR"/>
    <property type="match status" value="1"/>
</dbReference>
<dbReference type="PANTHER" id="PTHR34471:SF1">
    <property type="entry name" value="ARGININE REPRESSOR"/>
    <property type="match status" value="1"/>
</dbReference>
<dbReference type="Pfam" id="PF01316">
    <property type="entry name" value="Arg_repressor"/>
    <property type="match status" value="1"/>
</dbReference>
<dbReference type="Pfam" id="PF02863">
    <property type="entry name" value="Arg_repressor_C"/>
    <property type="match status" value="1"/>
</dbReference>
<dbReference type="PRINTS" id="PR01467">
    <property type="entry name" value="ARGREPRESSOR"/>
</dbReference>
<dbReference type="SUPFAM" id="SSF55252">
    <property type="entry name" value="C-terminal domain of arginine repressor"/>
    <property type="match status" value="1"/>
</dbReference>
<dbReference type="SUPFAM" id="SSF46785">
    <property type="entry name" value="Winged helix' DNA-binding domain"/>
    <property type="match status" value="1"/>
</dbReference>
<evidence type="ECO:0000255" key="1">
    <source>
        <dbReference type="HAMAP-Rule" id="MF_00173"/>
    </source>
</evidence>
<name>ARGR2_STRPQ</name>
<sequence>MNKMERQQQIKRIIQAEHIGTQEDIKNHLQKEGIVVTQATLSRDLRAIGLLKLRDEQGKLYYSLSEPVATPFSPEVRFYVLKVDRAGFMLVLHTNLGEADVLANLIDNDAIEDILGTIAGADTLLVICRDEEIAKRFEKDLAAGL</sequence>
<reference key="1">
    <citation type="journal article" date="2003" name="Genome Res.">
        <title>Genome sequence of an M3 strain of Streptococcus pyogenes reveals a large-scale genomic rearrangement in invasive strains and new insights into phage evolution.</title>
        <authorList>
            <person name="Nakagawa I."/>
            <person name="Kurokawa K."/>
            <person name="Yamashita A."/>
            <person name="Nakata M."/>
            <person name="Tomiyasu Y."/>
            <person name="Okahashi N."/>
            <person name="Kawabata S."/>
            <person name="Yamazaki K."/>
            <person name="Shiba T."/>
            <person name="Yasunaga T."/>
            <person name="Hayashi H."/>
            <person name="Hattori M."/>
            <person name="Hamada S."/>
        </authorList>
    </citation>
    <scope>NUCLEOTIDE SEQUENCE [LARGE SCALE GENOMIC DNA]</scope>
    <source>
        <strain>SSI-1</strain>
    </source>
</reference>
<accession>P0CZ71</accession>
<accession>Q79W08</accession>
<accession>Q8K5J3</accession>
<gene>
    <name evidence="1" type="primary">argR2</name>
    <name type="ordered locus">SPs1806</name>
</gene>
<comment type="function">
    <text evidence="1">Regulates arginine biosynthesis genes.</text>
</comment>
<comment type="pathway">
    <text>Amino-acid biosynthesis; L-arginine biosynthesis [regulation].</text>
</comment>
<comment type="subcellular location">
    <subcellularLocation>
        <location evidence="1">Cytoplasm</location>
    </subcellularLocation>
</comment>
<comment type="similarity">
    <text evidence="1">Belongs to the ArgR family.</text>
</comment>
<feature type="chain" id="PRO_0000411273" description="Arginine repressor">
    <location>
        <begin position="1"/>
        <end position="145"/>
    </location>
</feature>
<protein>
    <recommendedName>
        <fullName evidence="1">Arginine repressor</fullName>
    </recommendedName>
</protein>